<evidence type="ECO:0000250" key="1"/>
<evidence type="ECO:0000255" key="2">
    <source>
        <dbReference type="HAMAP-Rule" id="MF_00047"/>
    </source>
</evidence>
<sequence length="364" mass="39042">MPKQTVALFFGGKSVEHIISIISARAVASHIDHSRYDITPLYIDRGGHWHGGACAKRILALDVAVLLRNGGQDEVFERLDEITSFDEGKRFDLTAFFDSIDVAFLTLHGSYGEDGKIQGCLDTFDIPYAGCGLTSSALSMDKALTKLCAADAGVEVAGFMSVTSADYAADPQAICNAVTERFAFPVFVKPANLGSSVGISKVHNAAELRPALDKACALDAKVLVEETITGREVEVAVLGNDDPIASVPGEIIPGSDFYDFEDKYVKSDAKLVIPADLPGEVSAAVRNAALTVFKALGCSGMARVDFFVEHGTNRIILNEINTIPGFTDISMYPMLMSASGVEFDELISRLLLLALEKRAINPKI</sequence>
<gene>
    <name evidence="2" type="primary">ddl</name>
    <name type="ordered locus">Cpar_0811</name>
</gene>
<accession>B3QMS4</accession>
<name>DDL_CHLP8</name>
<comment type="function">
    <text evidence="2">Cell wall formation.</text>
</comment>
<comment type="catalytic activity">
    <reaction evidence="2">
        <text>2 D-alanine + ATP = D-alanyl-D-alanine + ADP + phosphate + H(+)</text>
        <dbReference type="Rhea" id="RHEA:11224"/>
        <dbReference type="ChEBI" id="CHEBI:15378"/>
        <dbReference type="ChEBI" id="CHEBI:30616"/>
        <dbReference type="ChEBI" id="CHEBI:43474"/>
        <dbReference type="ChEBI" id="CHEBI:57416"/>
        <dbReference type="ChEBI" id="CHEBI:57822"/>
        <dbReference type="ChEBI" id="CHEBI:456216"/>
        <dbReference type="EC" id="6.3.2.4"/>
    </reaction>
</comment>
<comment type="cofactor">
    <cofactor evidence="1">
        <name>Mg(2+)</name>
        <dbReference type="ChEBI" id="CHEBI:18420"/>
    </cofactor>
    <cofactor evidence="1">
        <name>Mn(2+)</name>
        <dbReference type="ChEBI" id="CHEBI:29035"/>
    </cofactor>
    <text evidence="1">Binds 2 magnesium or manganese ions per subunit.</text>
</comment>
<comment type="pathway">
    <text evidence="2">Cell wall biogenesis; peptidoglycan biosynthesis.</text>
</comment>
<comment type="subcellular location">
    <subcellularLocation>
        <location evidence="2">Cytoplasm</location>
    </subcellularLocation>
</comment>
<comment type="similarity">
    <text evidence="2">Belongs to the D-alanine--D-alanine ligase family.</text>
</comment>
<reference key="1">
    <citation type="submission" date="2008-06" db="EMBL/GenBank/DDBJ databases">
        <title>Complete sequence of Chlorobaculum parvum NCIB 8327.</title>
        <authorList>
            <consortium name="US DOE Joint Genome Institute"/>
            <person name="Lucas S."/>
            <person name="Copeland A."/>
            <person name="Lapidus A."/>
            <person name="Glavina del Rio T."/>
            <person name="Dalin E."/>
            <person name="Tice H."/>
            <person name="Bruce D."/>
            <person name="Goodwin L."/>
            <person name="Pitluck S."/>
            <person name="Schmutz J."/>
            <person name="Larimer F."/>
            <person name="Land M."/>
            <person name="Hauser L."/>
            <person name="Kyrpides N."/>
            <person name="Mikhailova N."/>
            <person name="Zhao F."/>
            <person name="Li T."/>
            <person name="Liu Z."/>
            <person name="Overmann J."/>
            <person name="Bryant D.A."/>
            <person name="Richardson P."/>
        </authorList>
    </citation>
    <scope>NUCLEOTIDE SEQUENCE [LARGE SCALE GENOMIC DNA]</scope>
    <source>
        <strain>DSM 263 / NCIMB 8327</strain>
    </source>
</reference>
<feature type="chain" id="PRO_1000091170" description="D-alanine--D-alanine ligase">
    <location>
        <begin position="1"/>
        <end position="364"/>
    </location>
</feature>
<feature type="domain" description="ATP-grasp" evidence="2">
    <location>
        <begin position="146"/>
        <end position="352"/>
    </location>
</feature>
<feature type="binding site" evidence="2">
    <location>
        <begin position="179"/>
        <end position="234"/>
    </location>
    <ligand>
        <name>ATP</name>
        <dbReference type="ChEBI" id="CHEBI:30616"/>
    </ligand>
</feature>
<feature type="binding site" evidence="2">
    <location>
        <position position="305"/>
    </location>
    <ligand>
        <name>Mg(2+)</name>
        <dbReference type="ChEBI" id="CHEBI:18420"/>
        <label>1</label>
    </ligand>
</feature>
<feature type="binding site" evidence="2">
    <location>
        <position position="319"/>
    </location>
    <ligand>
        <name>Mg(2+)</name>
        <dbReference type="ChEBI" id="CHEBI:18420"/>
        <label>1</label>
    </ligand>
</feature>
<feature type="binding site" evidence="2">
    <location>
        <position position="319"/>
    </location>
    <ligand>
        <name>Mg(2+)</name>
        <dbReference type="ChEBI" id="CHEBI:18420"/>
        <label>2</label>
    </ligand>
</feature>
<feature type="binding site" evidence="2">
    <location>
        <position position="321"/>
    </location>
    <ligand>
        <name>Mg(2+)</name>
        <dbReference type="ChEBI" id="CHEBI:18420"/>
        <label>2</label>
    </ligand>
</feature>
<keyword id="KW-0067">ATP-binding</keyword>
<keyword id="KW-0133">Cell shape</keyword>
<keyword id="KW-0961">Cell wall biogenesis/degradation</keyword>
<keyword id="KW-0963">Cytoplasm</keyword>
<keyword id="KW-0436">Ligase</keyword>
<keyword id="KW-0460">Magnesium</keyword>
<keyword id="KW-0464">Manganese</keyword>
<keyword id="KW-0479">Metal-binding</keyword>
<keyword id="KW-0547">Nucleotide-binding</keyword>
<keyword id="KW-0573">Peptidoglycan synthesis</keyword>
<protein>
    <recommendedName>
        <fullName evidence="2">D-alanine--D-alanine ligase</fullName>
        <ecNumber evidence="2">6.3.2.4</ecNumber>
    </recommendedName>
    <alternativeName>
        <fullName evidence="2">D-Ala-D-Ala ligase</fullName>
    </alternativeName>
    <alternativeName>
        <fullName evidence="2">D-alanylalanine synthetase</fullName>
    </alternativeName>
</protein>
<proteinExistence type="inferred from homology"/>
<organism>
    <name type="scientific">Chlorobaculum parvum (strain DSM 263 / NCIMB 8327)</name>
    <name type="common">Chlorobium vibrioforme subsp. thiosulfatophilum</name>
    <dbReference type="NCBI Taxonomy" id="517417"/>
    <lineage>
        <taxon>Bacteria</taxon>
        <taxon>Pseudomonadati</taxon>
        <taxon>Chlorobiota</taxon>
        <taxon>Chlorobiia</taxon>
        <taxon>Chlorobiales</taxon>
        <taxon>Chlorobiaceae</taxon>
        <taxon>Chlorobaculum</taxon>
    </lineage>
</organism>
<dbReference type="EC" id="6.3.2.4" evidence="2"/>
<dbReference type="EMBL" id="CP001099">
    <property type="protein sequence ID" value="ACF11227.1"/>
    <property type="molecule type" value="Genomic_DNA"/>
</dbReference>
<dbReference type="RefSeq" id="WP_012502060.1">
    <property type="nucleotide sequence ID" value="NC_011027.1"/>
</dbReference>
<dbReference type="SMR" id="B3QMS4"/>
<dbReference type="STRING" id="517417.Cpar_0811"/>
<dbReference type="KEGG" id="cpc:Cpar_0811"/>
<dbReference type="eggNOG" id="COG1181">
    <property type="taxonomic scope" value="Bacteria"/>
</dbReference>
<dbReference type="HOGENOM" id="CLU_039268_0_0_10"/>
<dbReference type="OrthoDB" id="9813261at2"/>
<dbReference type="UniPathway" id="UPA00219"/>
<dbReference type="Proteomes" id="UP000008811">
    <property type="component" value="Chromosome"/>
</dbReference>
<dbReference type="GO" id="GO:0005829">
    <property type="term" value="C:cytosol"/>
    <property type="evidence" value="ECO:0007669"/>
    <property type="project" value="TreeGrafter"/>
</dbReference>
<dbReference type="GO" id="GO:0005524">
    <property type="term" value="F:ATP binding"/>
    <property type="evidence" value="ECO:0007669"/>
    <property type="project" value="UniProtKB-KW"/>
</dbReference>
<dbReference type="GO" id="GO:0008716">
    <property type="term" value="F:D-alanine-D-alanine ligase activity"/>
    <property type="evidence" value="ECO:0007669"/>
    <property type="project" value="UniProtKB-UniRule"/>
</dbReference>
<dbReference type="GO" id="GO:0046872">
    <property type="term" value="F:metal ion binding"/>
    <property type="evidence" value="ECO:0007669"/>
    <property type="project" value="UniProtKB-KW"/>
</dbReference>
<dbReference type="GO" id="GO:0071555">
    <property type="term" value="P:cell wall organization"/>
    <property type="evidence" value="ECO:0007669"/>
    <property type="project" value="UniProtKB-KW"/>
</dbReference>
<dbReference type="GO" id="GO:0009252">
    <property type="term" value="P:peptidoglycan biosynthetic process"/>
    <property type="evidence" value="ECO:0007669"/>
    <property type="project" value="UniProtKB-UniRule"/>
</dbReference>
<dbReference type="GO" id="GO:0008360">
    <property type="term" value="P:regulation of cell shape"/>
    <property type="evidence" value="ECO:0007669"/>
    <property type="project" value="UniProtKB-KW"/>
</dbReference>
<dbReference type="FunFam" id="3.30.1490.20:FF:000007">
    <property type="entry name" value="D-alanine--D-alanine ligase"/>
    <property type="match status" value="1"/>
</dbReference>
<dbReference type="FunFam" id="3.30.470.20:FF:000008">
    <property type="entry name" value="D-alanine--D-alanine ligase"/>
    <property type="match status" value="1"/>
</dbReference>
<dbReference type="Gene3D" id="3.40.50.20">
    <property type="match status" value="1"/>
</dbReference>
<dbReference type="Gene3D" id="3.30.1490.20">
    <property type="entry name" value="ATP-grasp fold, A domain"/>
    <property type="match status" value="1"/>
</dbReference>
<dbReference type="Gene3D" id="3.30.470.20">
    <property type="entry name" value="ATP-grasp fold, B domain"/>
    <property type="match status" value="1"/>
</dbReference>
<dbReference type="HAMAP" id="MF_00047">
    <property type="entry name" value="Dala_Dala_lig"/>
    <property type="match status" value="1"/>
</dbReference>
<dbReference type="InterPro" id="IPR011761">
    <property type="entry name" value="ATP-grasp"/>
</dbReference>
<dbReference type="InterPro" id="IPR013815">
    <property type="entry name" value="ATP_grasp_subdomain_1"/>
</dbReference>
<dbReference type="InterPro" id="IPR000291">
    <property type="entry name" value="D-Ala_lig_Van_CS"/>
</dbReference>
<dbReference type="InterPro" id="IPR005905">
    <property type="entry name" value="D_ala_D_ala"/>
</dbReference>
<dbReference type="InterPro" id="IPR011095">
    <property type="entry name" value="Dala_Dala_lig_C"/>
</dbReference>
<dbReference type="InterPro" id="IPR011127">
    <property type="entry name" value="Dala_Dala_lig_N"/>
</dbReference>
<dbReference type="InterPro" id="IPR016185">
    <property type="entry name" value="PreATP-grasp_dom_sf"/>
</dbReference>
<dbReference type="NCBIfam" id="TIGR01205">
    <property type="entry name" value="D_ala_D_alaTIGR"/>
    <property type="match status" value="1"/>
</dbReference>
<dbReference type="NCBIfam" id="NF002378">
    <property type="entry name" value="PRK01372.1"/>
    <property type="match status" value="1"/>
</dbReference>
<dbReference type="NCBIfam" id="NF002528">
    <property type="entry name" value="PRK01966.1-4"/>
    <property type="match status" value="1"/>
</dbReference>
<dbReference type="PANTHER" id="PTHR23132">
    <property type="entry name" value="D-ALANINE--D-ALANINE LIGASE"/>
    <property type="match status" value="1"/>
</dbReference>
<dbReference type="PANTHER" id="PTHR23132:SF25">
    <property type="entry name" value="D-ALANINE--D-ALANINE LIGASE A"/>
    <property type="match status" value="1"/>
</dbReference>
<dbReference type="Pfam" id="PF07478">
    <property type="entry name" value="Dala_Dala_lig_C"/>
    <property type="match status" value="1"/>
</dbReference>
<dbReference type="Pfam" id="PF01820">
    <property type="entry name" value="Dala_Dala_lig_N"/>
    <property type="match status" value="1"/>
</dbReference>
<dbReference type="PIRSF" id="PIRSF039102">
    <property type="entry name" value="Ddl/VanB"/>
    <property type="match status" value="1"/>
</dbReference>
<dbReference type="SUPFAM" id="SSF56059">
    <property type="entry name" value="Glutathione synthetase ATP-binding domain-like"/>
    <property type="match status" value="1"/>
</dbReference>
<dbReference type="SUPFAM" id="SSF52440">
    <property type="entry name" value="PreATP-grasp domain"/>
    <property type="match status" value="1"/>
</dbReference>
<dbReference type="PROSITE" id="PS50975">
    <property type="entry name" value="ATP_GRASP"/>
    <property type="match status" value="1"/>
</dbReference>
<dbReference type="PROSITE" id="PS00843">
    <property type="entry name" value="DALA_DALA_LIGASE_1"/>
    <property type="match status" value="1"/>
</dbReference>
<dbReference type="PROSITE" id="PS00844">
    <property type="entry name" value="DALA_DALA_LIGASE_2"/>
    <property type="match status" value="1"/>
</dbReference>